<dbReference type="EMBL" id="AE005674">
    <property type="protein sequence ID" value="AAN44889.2"/>
    <property type="molecule type" value="Genomic_DNA"/>
</dbReference>
<dbReference type="EMBL" id="AE014073">
    <property type="protein sequence ID" value="AAP19290.1"/>
    <property type="molecule type" value="Genomic_DNA"/>
</dbReference>
<dbReference type="RefSeq" id="NP_709182.2">
    <property type="nucleotide sequence ID" value="NC_004337.2"/>
</dbReference>
<dbReference type="RefSeq" id="WP_000737027.1">
    <property type="nucleotide sequence ID" value="NZ_WPGW01000003.1"/>
</dbReference>
<dbReference type="SMR" id="Q83PW3"/>
<dbReference type="STRING" id="198214.SF3428"/>
<dbReference type="PaxDb" id="198214-SF3428"/>
<dbReference type="GeneID" id="1026508"/>
<dbReference type="KEGG" id="sfl:SF3428"/>
<dbReference type="KEGG" id="sfx:S4335"/>
<dbReference type="PATRIC" id="fig|198214.7.peg.4045"/>
<dbReference type="HOGENOM" id="CLU_013350_3_0_6"/>
<dbReference type="Proteomes" id="UP000001006">
    <property type="component" value="Chromosome"/>
</dbReference>
<dbReference type="Proteomes" id="UP000002673">
    <property type="component" value="Chromosome"/>
</dbReference>
<dbReference type="GO" id="GO:0005886">
    <property type="term" value="C:plasma membrane"/>
    <property type="evidence" value="ECO:0007669"/>
    <property type="project" value="UniProtKB-SubCell"/>
</dbReference>
<dbReference type="GO" id="GO:0015093">
    <property type="term" value="F:ferrous iron transmembrane transporter activity"/>
    <property type="evidence" value="ECO:0007669"/>
    <property type="project" value="InterPro"/>
</dbReference>
<dbReference type="GO" id="GO:0005525">
    <property type="term" value="F:GTP binding"/>
    <property type="evidence" value="ECO:0007669"/>
    <property type="project" value="UniProtKB-KW"/>
</dbReference>
<dbReference type="CDD" id="cd01879">
    <property type="entry name" value="FeoB"/>
    <property type="match status" value="1"/>
</dbReference>
<dbReference type="FunFam" id="3.40.50.300:FF:000426">
    <property type="entry name" value="Ferrous iron transport protein B"/>
    <property type="match status" value="1"/>
</dbReference>
<dbReference type="Gene3D" id="1.10.287.1770">
    <property type="match status" value="1"/>
</dbReference>
<dbReference type="Gene3D" id="3.40.50.300">
    <property type="entry name" value="P-loop containing nucleotide triphosphate hydrolases"/>
    <property type="match status" value="1"/>
</dbReference>
<dbReference type="InterPro" id="IPR003373">
    <property type="entry name" value="Fe2_transport_prot-B"/>
</dbReference>
<dbReference type="InterPro" id="IPR011640">
    <property type="entry name" value="Fe2_transport_prot_B_C"/>
</dbReference>
<dbReference type="InterPro" id="IPR041069">
    <property type="entry name" value="FeoB_Cyto"/>
</dbReference>
<dbReference type="InterPro" id="IPR050860">
    <property type="entry name" value="FeoB_GTPase"/>
</dbReference>
<dbReference type="InterPro" id="IPR030389">
    <property type="entry name" value="G_FEOB_dom"/>
</dbReference>
<dbReference type="InterPro" id="IPR011642">
    <property type="entry name" value="Gate_dom"/>
</dbReference>
<dbReference type="InterPro" id="IPR027417">
    <property type="entry name" value="P-loop_NTPase"/>
</dbReference>
<dbReference type="NCBIfam" id="TIGR00437">
    <property type="entry name" value="feoB"/>
    <property type="match status" value="1"/>
</dbReference>
<dbReference type="NCBIfam" id="NF007105">
    <property type="entry name" value="PRK09554.1"/>
    <property type="match status" value="1"/>
</dbReference>
<dbReference type="PANTHER" id="PTHR43185:SF1">
    <property type="entry name" value="FE(2+) TRANSPORTER FEOB"/>
    <property type="match status" value="1"/>
</dbReference>
<dbReference type="PANTHER" id="PTHR43185">
    <property type="entry name" value="FERROUS IRON TRANSPORT PROTEIN B"/>
    <property type="match status" value="1"/>
</dbReference>
<dbReference type="Pfam" id="PF07664">
    <property type="entry name" value="FeoB_C"/>
    <property type="match status" value="1"/>
</dbReference>
<dbReference type="Pfam" id="PF17910">
    <property type="entry name" value="FeoB_Cyto"/>
    <property type="match status" value="1"/>
</dbReference>
<dbReference type="Pfam" id="PF02421">
    <property type="entry name" value="FeoB_N"/>
    <property type="match status" value="1"/>
</dbReference>
<dbReference type="Pfam" id="PF07670">
    <property type="entry name" value="Gate"/>
    <property type="match status" value="2"/>
</dbReference>
<dbReference type="SUPFAM" id="SSF52540">
    <property type="entry name" value="P-loop containing nucleoside triphosphate hydrolases"/>
    <property type="match status" value="1"/>
</dbReference>
<dbReference type="PROSITE" id="PS51711">
    <property type="entry name" value="G_FEOB"/>
    <property type="match status" value="1"/>
</dbReference>
<comment type="function">
    <text evidence="1">Probable transporter of a GTP-driven Fe(2+) uptake system.</text>
</comment>
<comment type="subcellular location">
    <subcellularLocation>
        <location evidence="1">Cell inner membrane</location>
        <topology evidence="1">Multi-pass membrane protein</topology>
    </subcellularLocation>
</comment>
<comment type="induction">
    <text evidence="1">Iron uptake is repressed by the global regulator Fur.</text>
</comment>
<comment type="similarity">
    <text evidence="3">Belongs to the TRAFAC class TrmE-Era-EngA-EngB-Septin-like GTPase superfamily. FeoB GTPase (TC 9.A.8) family.</text>
</comment>
<protein>
    <recommendedName>
        <fullName evidence="4">Fe(2+) transporter FeoB</fullName>
    </recommendedName>
    <alternativeName>
        <fullName>Ferrous iron transport protein B</fullName>
    </alternativeName>
</protein>
<reference key="1">
    <citation type="journal article" date="2002" name="Nucleic Acids Res.">
        <title>Genome sequence of Shigella flexneri 2a: insights into pathogenicity through comparison with genomes of Escherichia coli K12 and O157.</title>
        <authorList>
            <person name="Jin Q."/>
            <person name="Yuan Z."/>
            <person name="Xu J."/>
            <person name="Wang Y."/>
            <person name="Shen Y."/>
            <person name="Lu W."/>
            <person name="Wang J."/>
            <person name="Liu H."/>
            <person name="Yang J."/>
            <person name="Yang F."/>
            <person name="Zhang X."/>
            <person name="Zhang J."/>
            <person name="Yang G."/>
            <person name="Wu H."/>
            <person name="Qu D."/>
            <person name="Dong J."/>
            <person name="Sun L."/>
            <person name="Xue Y."/>
            <person name="Zhao A."/>
            <person name="Gao Y."/>
            <person name="Zhu J."/>
            <person name="Kan B."/>
            <person name="Ding K."/>
            <person name="Chen S."/>
            <person name="Cheng H."/>
            <person name="Yao Z."/>
            <person name="He B."/>
            <person name="Chen R."/>
            <person name="Ma D."/>
            <person name="Qiang B."/>
            <person name="Wen Y."/>
            <person name="Hou Y."/>
            <person name="Yu J."/>
        </authorList>
    </citation>
    <scope>NUCLEOTIDE SEQUENCE [LARGE SCALE GENOMIC DNA]</scope>
    <source>
        <strain>301 / Serotype 2a</strain>
    </source>
</reference>
<reference key="2">
    <citation type="journal article" date="2003" name="Infect. Immun.">
        <title>Complete genome sequence and comparative genomics of Shigella flexneri serotype 2a strain 2457T.</title>
        <authorList>
            <person name="Wei J."/>
            <person name="Goldberg M.B."/>
            <person name="Burland V."/>
            <person name="Venkatesan M.M."/>
            <person name="Deng W."/>
            <person name="Fournier G."/>
            <person name="Mayhew G.F."/>
            <person name="Plunkett G. III"/>
            <person name="Rose D.J."/>
            <person name="Darling A."/>
            <person name="Mau B."/>
            <person name="Perna N.T."/>
            <person name="Payne S.M."/>
            <person name="Runyen-Janecky L.J."/>
            <person name="Zhou S."/>
            <person name="Schwartz D.C."/>
            <person name="Blattner F.R."/>
        </authorList>
    </citation>
    <scope>NUCLEOTIDE SEQUENCE [LARGE SCALE GENOMIC DNA]</scope>
    <source>
        <strain>ATCC 700930 / 2457T / Serotype 2a</strain>
    </source>
</reference>
<reference key="3">
    <citation type="journal article" date="2003" name="Infect. Immun.">
        <title>Contribution of the Shigella flexneri Sit, Iuc, and Feo iron acquisition systems to iron acquisition in vitro and in cultured cells.</title>
        <authorList>
            <person name="Runyen-Janecky L.J."/>
            <person name="Reeves S.A."/>
            <person name="Gonzales E.G."/>
            <person name="Payne S.M."/>
        </authorList>
    </citation>
    <scope>INVOLVEMENT IN IRON UPTAKE</scope>
    <source>
        <strain>SA100 / Serotype 2a</strain>
    </source>
</reference>
<gene>
    <name type="primary">feoB</name>
    <name type="ordered locus">SF3428</name>
    <name type="ordered locus">S4335</name>
</gene>
<accession>Q83PW3</accession>
<accession>Q7UAT2</accession>
<sequence>MKKLTIGLIGNPNSGKTTLFNQLTGARQRVGNWAGVTVERKEGQFSTTDHQVTLVDLPGTYSLTTISSQTSLDEQIACHYILSGDADLLINVVDASNLERNLYLTLQLLELGIPCIVALNMLDIAEKQNIRIEIDALSARLGCPVIPLVSTRGRGIEALKLAIDRYKANENVELVHYAQPLLNEADSLAKVMPSDIPLKQRRWLGLQMLEGDIYSRAYAGEASQHLDATLARLRNEMDDPALHIADARYQCIAAICDVVSNTLTAEPSRFTTAVDKIVLNRFLGLPIFLFVMYLMFLLAINIGGALQPLFNVGSVALFVHGIQWIGYTLHFPDWLTIFLAQGLGGGINTVLPLVPQIGMMYLFLSFLEDSGYMARAAFVMDRLMQALGLPGKSFVPLIVGFGCNVPSVMGARTLDAPRERLMTIMMAPFMSCGARLAIFAVFAAAFFGQNGALAVFSLYMLGIVMAVLTGLMLKYTIMRGEATPFVMELPVYHVPHVKSLIIQTWQRLKGFVLRAGKVIIIVSIFLSAFNSFSLSGKIVDNINDSALASVSRVITPVFKPIGVHEDNWQATVGLFTGAMAKEVVVGTLNTLYTAENIQDEEFNPAEFNLGEELFSAVDETWQSLKDTFSLSVLMNPIEASKGNGEMGTGAMGVMDQKFGSAAAAYSYLIFVLLYVPCISVMGAIARESSRGWMGFSILWGLNIAYSLATLFYQVASYSQHPTYSLVCILAVILFNIVAIGLLRRARSRVDIELLATRKSVSSCCAASTTGDCH</sequence>
<keyword id="KW-0997">Cell inner membrane</keyword>
<keyword id="KW-1003">Cell membrane</keyword>
<keyword id="KW-0342">GTP-binding</keyword>
<keyword id="KW-0406">Ion transport</keyword>
<keyword id="KW-0408">Iron</keyword>
<keyword id="KW-0410">Iron transport</keyword>
<keyword id="KW-0472">Membrane</keyword>
<keyword id="KW-0547">Nucleotide-binding</keyword>
<keyword id="KW-1185">Reference proteome</keyword>
<keyword id="KW-0812">Transmembrane</keyword>
<keyword id="KW-1133">Transmembrane helix</keyword>
<keyword id="KW-0813">Transport</keyword>
<evidence type="ECO:0000250" key="1">
    <source>
        <dbReference type="UniProtKB" id="P33650"/>
    </source>
</evidence>
<evidence type="ECO:0000255" key="2"/>
<evidence type="ECO:0000255" key="3">
    <source>
        <dbReference type="PROSITE-ProRule" id="PRU01048"/>
    </source>
</evidence>
<evidence type="ECO:0000305" key="4"/>
<name>FEOB_SHIFL</name>
<proteinExistence type="inferred from homology"/>
<feature type="chain" id="PRO_0000210828" description="Fe(2+) transporter FeoB">
    <location>
        <begin position="1"/>
        <end position="773"/>
    </location>
</feature>
<feature type="transmembrane region" description="Helical" evidence="2">
    <location>
        <begin position="282"/>
        <end position="302"/>
    </location>
</feature>
<feature type="transmembrane region" description="Helical" evidence="2">
    <location>
        <begin position="309"/>
        <end position="329"/>
    </location>
</feature>
<feature type="transmembrane region" description="Helical" evidence="2">
    <location>
        <begin position="344"/>
        <end position="366"/>
    </location>
</feature>
<feature type="transmembrane region" description="Helical" evidence="2">
    <location>
        <begin position="383"/>
        <end position="403"/>
    </location>
</feature>
<feature type="transmembrane region" description="Helical" evidence="2">
    <location>
        <begin position="427"/>
        <end position="447"/>
    </location>
</feature>
<feature type="transmembrane region" description="Helical" evidence="2">
    <location>
        <begin position="453"/>
        <end position="473"/>
    </location>
</feature>
<feature type="transmembrane region" description="Helical" evidence="2">
    <location>
        <begin position="518"/>
        <end position="538"/>
    </location>
</feature>
<feature type="transmembrane region" description="Helical" evidence="2">
    <location>
        <begin position="664"/>
        <end position="684"/>
    </location>
</feature>
<feature type="transmembrane region" description="Helical" evidence="2">
    <location>
        <begin position="691"/>
        <end position="711"/>
    </location>
</feature>
<feature type="transmembrane region" description="Helical" evidence="2">
    <location>
        <begin position="722"/>
        <end position="742"/>
    </location>
</feature>
<feature type="domain" description="FeoB-type G" evidence="3">
    <location>
        <begin position="3"/>
        <end position="169"/>
    </location>
</feature>
<feature type="binding site" evidence="3">
    <location>
        <begin position="10"/>
        <end position="17"/>
    </location>
    <ligand>
        <name>GTP</name>
        <dbReference type="ChEBI" id="CHEBI:37565"/>
        <label>1</label>
    </ligand>
</feature>
<feature type="binding site" evidence="3">
    <location>
        <begin position="35"/>
        <end position="39"/>
    </location>
    <ligand>
        <name>GTP</name>
        <dbReference type="ChEBI" id="CHEBI:37565"/>
        <label>2</label>
    </ligand>
</feature>
<feature type="binding site" evidence="3">
    <location>
        <begin position="56"/>
        <end position="59"/>
    </location>
    <ligand>
        <name>GTP</name>
        <dbReference type="ChEBI" id="CHEBI:37565"/>
        <label>3</label>
    </ligand>
</feature>
<feature type="binding site" evidence="3">
    <location>
        <begin position="120"/>
        <end position="123"/>
    </location>
    <ligand>
        <name>GTP</name>
        <dbReference type="ChEBI" id="CHEBI:37565"/>
    </ligand>
</feature>
<feature type="binding site" evidence="3">
    <location>
        <begin position="149"/>
        <end position="151"/>
    </location>
    <ligand>
        <name>GTP</name>
        <dbReference type="ChEBI" id="CHEBI:37565"/>
    </ligand>
</feature>
<organism>
    <name type="scientific">Shigella flexneri</name>
    <dbReference type="NCBI Taxonomy" id="623"/>
    <lineage>
        <taxon>Bacteria</taxon>
        <taxon>Pseudomonadati</taxon>
        <taxon>Pseudomonadota</taxon>
        <taxon>Gammaproteobacteria</taxon>
        <taxon>Enterobacterales</taxon>
        <taxon>Enterobacteriaceae</taxon>
        <taxon>Shigella</taxon>
    </lineage>
</organism>